<comment type="function">
    <text evidence="1">Hydrolyzes ribosome-free peptidyl-tRNAs (with 1 or more amino acids incorporated), which drop off the ribosome during protein synthesis, or as a result of ribosome stalling.</text>
</comment>
<comment type="function">
    <text evidence="1">Catalyzes the release of premature peptidyl moieties from peptidyl-tRNA molecules trapped in stalled 50S ribosomal subunits, and thus maintains levels of free tRNAs and 50S ribosomes.</text>
</comment>
<comment type="catalytic activity">
    <reaction evidence="1">
        <text>an N-acyl-L-alpha-aminoacyl-tRNA + H2O = an N-acyl-L-amino acid + a tRNA + H(+)</text>
        <dbReference type="Rhea" id="RHEA:54448"/>
        <dbReference type="Rhea" id="RHEA-COMP:10123"/>
        <dbReference type="Rhea" id="RHEA-COMP:13883"/>
        <dbReference type="ChEBI" id="CHEBI:15377"/>
        <dbReference type="ChEBI" id="CHEBI:15378"/>
        <dbReference type="ChEBI" id="CHEBI:59874"/>
        <dbReference type="ChEBI" id="CHEBI:78442"/>
        <dbReference type="ChEBI" id="CHEBI:138191"/>
        <dbReference type="EC" id="3.1.1.29"/>
    </reaction>
</comment>
<comment type="subunit">
    <text evidence="1">Monomer.</text>
</comment>
<comment type="subcellular location">
    <subcellularLocation>
        <location evidence="1">Cytoplasm</location>
    </subcellularLocation>
</comment>
<comment type="similarity">
    <text evidence="1">Belongs to the PTH family.</text>
</comment>
<gene>
    <name evidence="1" type="primary">pth</name>
    <name type="ordered locus">CPF_2808</name>
</gene>
<evidence type="ECO:0000255" key="1">
    <source>
        <dbReference type="HAMAP-Rule" id="MF_00083"/>
    </source>
</evidence>
<reference key="1">
    <citation type="journal article" date="2006" name="Genome Res.">
        <title>Skewed genomic variability in strains of the toxigenic bacterial pathogen, Clostridium perfringens.</title>
        <authorList>
            <person name="Myers G.S.A."/>
            <person name="Rasko D.A."/>
            <person name="Cheung J.K."/>
            <person name="Ravel J."/>
            <person name="Seshadri R."/>
            <person name="DeBoy R.T."/>
            <person name="Ren Q."/>
            <person name="Varga J."/>
            <person name="Awad M.M."/>
            <person name="Brinkac L.M."/>
            <person name="Daugherty S.C."/>
            <person name="Haft D.H."/>
            <person name="Dodson R.J."/>
            <person name="Madupu R."/>
            <person name="Nelson W.C."/>
            <person name="Rosovitz M.J."/>
            <person name="Sullivan S.A."/>
            <person name="Khouri H."/>
            <person name="Dimitrov G.I."/>
            <person name="Watkins K.L."/>
            <person name="Mulligan S."/>
            <person name="Benton J."/>
            <person name="Radune D."/>
            <person name="Fisher D.J."/>
            <person name="Atkins H.S."/>
            <person name="Hiscox T."/>
            <person name="Jost B.H."/>
            <person name="Billington S.J."/>
            <person name="Songer J.G."/>
            <person name="McClane B.A."/>
            <person name="Titball R.W."/>
            <person name="Rood J.I."/>
            <person name="Melville S.B."/>
            <person name="Paulsen I.T."/>
        </authorList>
    </citation>
    <scope>NUCLEOTIDE SEQUENCE [LARGE SCALE GENOMIC DNA]</scope>
    <source>
        <strain>ATCC 13124 / DSM 756 / JCM 1290 / NCIMB 6125 / NCTC 8237 / S 107 / Type A</strain>
    </source>
</reference>
<organism>
    <name type="scientific">Clostridium perfringens (strain ATCC 13124 / DSM 756 / JCM 1290 / NCIMB 6125 / NCTC 8237 / Type A)</name>
    <dbReference type="NCBI Taxonomy" id="195103"/>
    <lineage>
        <taxon>Bacteria</taxon>
        <taxon>Bacillati</taxon>
        <taxon>Bacillota</taxon>
        <taxon>Clostridia</taxon>
        <taxon>Eubacteriales</taxon>
        <taxon>Clostridiaceae</taxon>
        <taxon>Clostridium</taxon>
    </lineage>
</organism>
<keyword id="KW-0963">Cytoplasm</keyword>
<keyword id="KW-0378">Hydrolase</keyword>
<keyword id="KW-0694">RNA-binding</keyword>
<keyword id="KW-0820">tRNA-binding</keyword>
<accession>Q0TMG7</accession>
<proteinExistence type="inferred from homology"/>
<feature type="chain" id="PRO_0000264022" description="Peptidyl-tRNA hydrolase">
    <location>
        <begin position="1"/>
        <end position="188"/>
    </location>
</feature>
<feature type="active site" description="Proton acceptor" evidence="1">
    <location>
        <position position="19"/>
    </location>
</feature>
<feature type="binding site" evidence="1">
    <location>
        <position position="14"/>
    </location>
    <ligand>
        <name>tRNA</name>
        <dbReference type="ChEBI" id="CHEBI:17843"/>
    </ligand>
</feature>
<feature type="binding site" evidence="1">
    <location>
        <position position="64"/>
    </location>
    <ligand>
        <name>tRNA</name>
        <dbReference type="ChEBI" id="CHEBI:17843"/>
    </ligand>
</feature>
<feature type="binding site" evidence="1">
    <location>
        <position position="66"/>
    </location>
    <ligand>
        <name>tRNA</name>
        <dbReference type="ChEBI" id="CHEBI:17843"/>
    </ligand>
</feature>
<feature type="binding site" evidence="1">
    <location>
        <position position="112"/>
    </location>
    <ligand>
        <name>tRNA</name>
        <dbReference type="ChEBI" id="CHEBI:17843"/>
    </ligand>
</feature>
<feature type="site" description="Discriminates between blocked and unblocked aminoacyl-tRNA" evidence="1">
    <location>
        <position position="9"/>
    </location>
</feature>
<feature type="site" description="Stabilizes the basic form of H active site to accept a proton" evidence="1">
    <location>
        <position position="91"/>
    </location>
</feature>
<dbReference type="EC" id="3.1.1.29" evidence="1"/>
<dbReference type="EMBL" id="CP000246">
    <property type="protein sequence ID" value="ABG82576.1"/>
    <property type="molecule type" value="Genomic_DNA"/>
</dbReference>
<dbReference type="RefSeq" id="WP_003450588.1">
    <property type="nucleotide sequence ID" value="NC_008261.1"/>
</dbReference>
<dbReference type="SMR" id="Q0TMG7"/>
<dbReference type="STRING" id="195103.CPF_2808"/>
<dbReference type="PaxDb" id="195103-CPF_2808"/>
<dbReference type="GeneID" id="93000911"/>
<dbReference type="KEGG" id="cpf:CPF_2808"/>
<dbReference type="eggNOG" id="COG0193">
    <property type="taxonomic scope" value="Bacteria"/>
</dbReference>
<dbReference type="HOGENOM" id="CLU_062456_4_1_9"/>
<dbReference type="Proteomes" id="UP000001823">
    <property type="component" value="Chromosome"/>
</dbReference>
<dbReference type="GO" id="GO:0005737">
    <property type="term" value="C:cytoplasm"/>
    <property type="evidence" value="ECO:0007669"/>
    <property type="project" value="UniProtKB-SubCell"/>
</dbReference>
<dbReference type="GO" id="GO:0004045">
    <property type="term" value="F:peptidyl-tRNA hydrolase activity"/>
    <property type="evidence" value="ECO:0007669"/>
    <property type="project" value="UniProtKB-UniRule"/>
</dbReference>
<dbReference type="GO" id="GO:0000049">
    <property type="term" value="F:tRNA binding"/>
    <property type="evidence" value="ECO:0007669"/>
    <property type="project" value="UniProtKB-UniRule"/>
</dbReference>
<dbReference type="GO" id="GO:0006515">
    <property type="term" value="P:protein quality control for misfolded or incompletely synthesized proteins"/>
    <property type="evidence" value="ECO:0007669"/>
    <property type="project" value="UniProtKB-UniRule"/>
</dbReference>
<dbReference type="GO" id="GO:0072344">
    <property type="term" value="P:rescue of stalled ribosome"/>
    <property type="evidence" value="ECO:0007669"/>
    <property type="project" value="UniProtKB-UniRule"/>
</dbReference>
<dbReference type="CDD" id="cd00462">
    <property type="entry name" value="PTH"/>
    <property type="match status" value="1"/>
</dbReference>
<dbReference type="FunFam" id="3.40.50.1470:FF:000001">
    <property type="entry name" value="Peptidyl-tRNA hydrolase"/>
    <property type="match status" value="1"/>
</dbReference>
<dbReference type="Gene3D" id="3.40.50.1470">
    <property type="entry name" value="Peptidyl-tRNA hydrolase"/>
    <property type="match status" value="1"/>
</dbReference>
<dbReference type="HAMAP" id="MF_00083">
    <property type="entry name" value="Pept_tRNA_hydro_bact"/>
    <property type="match status" value="1"/>
</dbReference>
<dbReference type="InterPro" id="IPR001328">
    <property type="entry name" value="Pept_tRNA_hydro"/>
</dbReference>
<dbReference type="InterPro" id="IPR018171">
    <property type="entry name" value="Pept_tRNA_hydro_CS"/>
</dbReference>
<dbReference type="InterPro" id="IPR036416">
    <property type="entry name" value="Pept_tRNA_hydro_sf"/>
</dbReference>
<dbReference type="NCBIfam" id="TIGR00447">
    <property type="entry name" value="pth"/>
    <property type="match status" value="1"/>
</dbReference>
<dbReference type="PANTHER" id="PTHR17224">
    <property type="entry name" value="PEPTIDYL-TRNA HYDROLASE"/>
    <property type="match status" value="1"/>
</dbReference>
<dbReference type="PANTHER" id="PTHR17224:SF1">
    <property type="entry name" value="PEPTIDYL-TRNA HYDROLASE"/>
    <property type="match status" value="1"/>
</dbReference>
<dbReference type="Pfam" id="PF01195">
    <property type="entry name" value="Pept_tRNA_hydro"/>
    <property type="match status" value="1"/>
</dbReference>
<dbReference type="SUPFAM" id="SSF53178">
    <property type="entry name" value="Peptidyl-tRNA hydrolase-like"/>
    <property type="match status" value="1"/>
</dbReference>
<dbReference type="PROSITE" id="PS01195">
    <property type="entry name" value="PEPT_TRNA_HYDROL_1"/>
    <property type="match status" value="1"/>
</dbReference>
<dbReference type="PROSITE" id="PS01196">
    <property type="entry name" value="PEPT_TRNA_HYDROL_2"/>
    <property type="match status" value="1"/>
</dbReference>
<name>PTH_CLOP1</name>
<protein>
    <recommendedName>
        <fullName evidence="1">Peptidyl-tRNA hydrolase</fullName>
        <shortName evidence="1">Pth</shortName>
        <ecNumber evidence="1">3.1.1.29</ecNumber>
    </recommendedName>
</protein>
<sequence>MILIVGLGNPGKQYEQTRHNIGFDVIDYMANKYNIDVNREKFKGICGEGFIENKKVILLKPLTYMNLSGESIRELANFYKLEDDEIIVVYDDISLDIGRLRIREKGSAGGHNGIKSIIQNLGGDKFPRVKVGVGQPKDNLVNHVLGKFSKEDREHIEKVIPVVSDAIVEIVKNDAKESMNKFNGVNIE</sequence>